<accession>P20125</accession>
<comment type="function">
    <text evidence="1 2">Self-assembles to form a T=3 icosahedral capsid composed of 180 copies of the capsid protein. The capsid encapsulates the single-stranded RNA genome (PubMed:15780874). A pentameric unit may be lost during decapsidation (By similarity).</text>
</comment>
<comment type="subcellular location">
    <subcellularLocation>
        <location evidence="2">Virion</location>
    </subcellularLocation>
</comment>
<comment type="similarity">
    <text evidence="3">Belongs to the tymoviruses capsid protein family.</text>
</comment>
<sequence length="189" mass="20152">MEIDKELAPQDRTVTVATVLPTVPGPSPFTIKQPFQSEVLFAGTKDAEASLTIANIDSVSTLTTFYRHASLESLWVTIHPTLQAPAFPTTVGVCWVPANSPVTPTQITKTYGGQIFCIGGAINTLSPLIVKCPLEMMNPRVKDSIQYLDSPKLLISITAQPTAPPASTCIITVSGTLSMHSPLITDTST</sequence>
<organismHost>
    <name type="scientific">Brassica</name>
    <dbReference type="NCBI Taxonomy" id="3705"/>
</organismHost>
<organismHost>
    <name type="scientific">Cardamine lilacina</name>
    <dbReference type="NCBI Taxonomy" id="82359"/>
</organismHost>
<protein>
    <recommendedName>
        <fullName>Capsid protein</fullName>
    </recommendedName>
    <alternativeName>
        <fullName>Coat protein</fullName>
    </alternativeName>
    <alternativeName>
        <fullName>Virion protein</fullName>
    </alternativeName>
</protein>
<keyword id="KW-0002">3D-structure</keyword>
<keyword id="KW-0167">Capsid protein</keyword>
<keyword id="KW-1142">T=3 icosahedral capsid protein</keyword>
<keyword id="KW-0946">Virion</keyword>
<proteinExistence type="evidence at protein level"/>
<feature type="chain" id="PRO_0000222932" description="Capsid protein">
    <location>
        <begin position="1"/>
        <end position="189"/>
    </location>
</feature>
<feature type="strand" evidence="6">
    <location>
        <begin position="24"/>
        <end position="26"/>
    </location>
</feature>
<feature type="strand" evidence="6">
    <location>
        <begin position="30"/>
        <end position="45"/>
    </location>
</feature>
<feature type="strand" evidence="6">
    <location>
        <begin position="47"/>
        <end position="52"/>
    </location>
</feature>
<feature type="helix" evidence="6">
    <location>
        <begin position="53"/>
        <end position="55"/>
    </location>
</feature>
<feature type="helix" evidence="6">
    <location>
        <begin position="57"/>
        <end position="63"/>
    </location>
</feature>
<feature type="strand" evidence="6">
    <location>
        <begin position="66"/>
        <end position="80"/>
    </location>
</feature>
<feature type="turn" evidence="6">
    <location>
        <begin position="82"/>
        <end position="86"/>
    </location>
</feature>
<feature type="strand" evidence="6">
    <location>
        <begin position="90"/>
        <end position="97"/>
    </location>
</feature>
<feature type="helix" evidence="6">
    <location>
        <begin position="104"/>
        <end position="109"/>
    </location>
</feature>
<feature type="strand" evidence="6">
    <location>
        <begin position="110"/>
        <end position="112"/>
    </location>
</feature>
<feature type="strand" evidence="6">
    <location>
        <begin position="114"/>
        <end position="116"/>
    </location>
</feature>
<feature type="strand" evidence="6">
    <location>
        <begin position="119"/>
        <end position="122"/>
    </location>
</feature>
<feature type="strand" evidence="6">
    <location>
        <begin position="129"/>
        <end position="131"/>
    </location>
</feature>
<feature type="helix" evidence="6">
    <location>
        <begin position="134"/>
        <end position="136"/>
    </location>
</feature>
<feature type="strand" evidence="6">
    <location>
        <begin position="140"/>
        <end position="145"/>
    </location>
</feature>
<feature type="strand" evidence="6">
    <location>
        <begin position="150"/>
        <end position="158"/>
    </location>
</feature>
<feature type="strand" evidence="6">
    <location>
        <begin position="169"/>
        <end position="182"/>
    </location>
</feature>
<name>CAPSD_TYMVA</name>
<reference key="1">
    <citation type="journal article" date="1989" name="Virology">
        <title>Nucleotide sequence of the genome of an Australian isolate of turnip yellow mosaic tymovirus.</title>
        <authorList>
            <person name="Keese P."/>
            <person name="Mackenzie A."/>
            <person name="Gibbs A."/>
        </authorList>
    </citation>
    <scope>NUCLEOTIDE SEQUENCE [GENOMIC RNA]</scope>
</reference>
<reference evidence="4 5" key="2">
    <citation type="journal article" date="2005" name="Virology">
        <title>The RNA of turnip yellow mosaic virus exhibits icosahedral order.</title>
        <authorList>
            <person name="Larson S.B."/>
            <person name="Lucas R.W."/>
            <person name="Greenwood A."/>
            <person name="McPherson A."/>
        </authorList>
    </citation>
    <scope>X-RAY CRYSTALLOGRAPHY (2.90 ANGSTROMS)</scope>
    <scope>FUNCTION</scope>
    <scope>SUBCELLULAR LOCATION</scope>
</reference>
<evidence type="ECO:0000250" key="1">
    <source>
        <dbReference type="UniProtKB" id="P03608"/>
    </source>
</evidence>
<evidence type="ECO:0000269" key="2">
    <source>
    </source>
</evidence>
<evidence type="ECO:0000305" key="3"/>
<evidence type="ECO:0007744" key="4">
    <source>
        <dbReference type="PDB" id="2FZ1"/>
    </source>
</evidence>
<evidence type="ECO:0007744" key="5">
    <source>
        <dbReference type="PDB" id="2FZ2"/>
    </source>
</evidence>
<evidence type="ECO:0007829" key="6">
    <source>
        <dbReference type="PDB" id="2FZ1"/>
    </source>
</evidence>
<dbReference type="EMBL" id="J04373">
    <property type="protein sequence ID" value="AAA46593.1"/>
    <property type="molecule type" value="Genomic_RNA"/>
</dbReference>
<dbReference type="PIR" id="JQ0111">
    <property type="entry name" value="VCWPTM"/>
</dbReference>
<dbReference type="PDB" id="2FZ1">
    <property type="method" value="X-ray"/>
    <property type="resolution" value="2.90 A"/>
    <property type="chains" value="A/B/C=1-189"/>
</dbReference>
<dbReference type="PDB" id="2FZ2">
    <property type="method" value="X-ray"/>
    <property type="resolution" value="2.90 A"/>
    <property type="chains" value="A/B/C=1-189"/>
</dbReference>
<dbReference type="PDBsum" id="2FZ1"/>
<dbReference type="PDBsum" id="2FZ2"/>
<dbReference type="SMR" id="P20125"/>
<dbReference type="EvolutionaryTrace" id="P20125"/>
<dbReference type="Proteomes" id="UP000008268">
    <property type="component" value="Genome"/>
</dbReference>
<dbReference type="GO" id="GO:0039617">
    <property type="term" value="C:T=3 icosahedral viral capsid"/>
    <property type="evidence" value="ECO:0007669"/>
    <property type="project" value="UniProtKB-KW"/>
</dbReference>
<dbReference type="GO" id="GO:0005198">
    <property type="term" value="F:structural molecule activity"/>
    <property type="evidence" value="ECO:0007669"/>
    <property type="project" value="InterPro"/>
</dbReference>
<dbReference type="Gene3D" id="2.60.120.20">
    <property type="match status" value="1"/>
</dbReference>
<dbReference type="InterPro" id="IPR000574">
    <property type="entry name" value="Tymo_coat"/>
</dbReference>
<dbReference type="InterPro" id="IPR029053">
    <property type="entry name" value="Viral_coat"/>
</dbReference>
<dbReference type="Pfam" id="PF00983">
    <property type="entry name" value="Tymo_coat"/>
    <property type="match status" value="1"/>
</dbReference>
<dbReference type="SUPFAM" id="SSF88633">
    <property type="entry name" value="Positive stranded ssRNA viruses"/>
    <property type="match status" value="1"/>
</dbReference>
<organism>
    <name type="scientific">Turnip yellow mosaic virus (isolate Australia)</name>
    <dbReference type="NCBI Taxonomy" id="12155"/>
    <lineage>
        <taxon>Viruses</taxon>
        <taxon>Riboviria</taxon>
        <taxon>Orthornavirae</taxon>
        <taxon>Kitrinoviricota</taxon>
        <taxon>Alsuviricetes</taxon>
        <taxon>Tymovirales</taxon>
        <taxon>Tymoviridae</taxon>
        <taxon>Tymovirus</taxon>
        <taxon>Tymovirus brassicae</taxon>
    </lineage>
</organism>